<evidence type="ECO:0000255" key="1">
    <source>
        <dbReference type="HAMAP-Rule" id="MF_01694"/>
    </source>
</evidence>
<evidence type="ECO:0000255" key="2">
    <source>
        <dbReference type="PROSITE-ProRule" id="PRU01266"/>
    </source>
</evidence>
<evidence type="ECO:0000305" key="3"/>
<organism>
    <name type="scientific">Parvibaculum lavamentivorans (strain DS-1 / DSM 13023 / NCIMB 13966)</name>
    <dbReference type="NCBI Taxonomy" id="402881"/>
    <lineage>
        <taxon>Bacteria</taxon>
        <taxon>Pseudomonadati</taxon>
        <taxon>Pseudomonadota</taxon>
        <taxon>Alphaproteobacteria</taxon>
        <taxon>Hyphomicrobiales</taxon>
        <taxon>Parvibaculaceae</taxon>
        <taxon>Parvibaculum</taxon>
    </lineage>
</organism>
<name>BIOB_PARL1</name>
<dbReference type="EC" id="2.8.1.6" evidence="1"/>
<dbReference type="EMBL" id="CP000774">
    <property type="protein sequence ID" value="ABS61659.1"/>
    <property type="status" value="ALT_INIT"/>
    <property type="molecule type" value="Genomic_DNA"/>
</dbReference>
<dbReference type="SMR" id="A7HP26"/>
<dbReference type="STRING" id="402881.Plav_0036"/>
<dbReference type="KEGG" id="pla:Plav_0036"/>
<dbReference type="eggNOG" id="COG0502">
    <property type="taxonomic scope" value="Bacteria"/>
</dbReference>
<dbReference type="HOGENOM" id="CLU_033172_1_2_5"/>
<dbReference type="UniPathway" id="UPA00078">
    <property type="reaction ID" value="UER00162"/>
</dbReference>
<dbReference type="Proteomes" id="UP000006377">
    <property type="component" value="Chromosome"/>
</dbReference>
<dbReference type="GO" id="GO:0051537">
    <property type="term" value="F:2 iron, 2 sulfur cluster binding"/>
    <property type="evidence" value="ECO:0007669"/>
    <property type="project" value="UniProtKB-KW"/>
</dbReference>
<dbReference type="GO" id="GO:0051539">
    <property type="term" value="F:4 iron, 4 sulfur cluster binding"/>
    <property type="evidence" value="ECO:0007669"/>
    <property type="project" value="UniProtKB-KW"/>
</dbReference>
<dbReference type="GO" id="GO:0004076">
    <property type="term" value="F:biotin synthase activity"/>
    <property type="evidence" value="ECO:0007669"/>
    <property type="project" value="UniProtKB-UniRule"/>
</dbReference>
<dbReference type="GO" id="GO:0005506">
    <property type="term" value="F:iron ion binding"/>
    <property type="evidence" value="ECO:0007669"/>
    <property type="project" value="UniProtKB-UniRule"/>
</dbReference>
<dbReference type="GO" id="GO:0009102">
    <property type="term" value="P:biotin biosynthetic process"/>
    <property type="evidence" value="ECO:0007669"/>
    <property type="project" value="UniProtKB-UniRule"/>
</dbReference>
<dbReference type="CDD" id="cd01335">
    <property type="entry name" value="Radical_SAM"/>
    <property type="match status" value="1"/>
</dbReference>
<dbReference type="FunFam" id="3.20.20.70:FF:000011">
    <property type="entry name" value="Biotin synthase"/>
    <property type="match status" value="1"/>
</dbReference>
<dbReference type="Gene3D" id="3.20.20.70">
    <property type="entry name" value="Aldolase class I"/>
    <property type="match status" value="1"/>
</dbReference>
<dbReference type="HAMAP" id="MF_01694">
    <property type="entry name" value="BioB"/>
    <property type="match status" value="1"/>
</dbReference>
<dbReference type="InterPro" id="IPR013785">
    <property type="entry name" value="Aldolase_TIM"/>
</dbReference>
<dbReference type="InterPro" id="IPR010722">
    <property type="entry name" value="BATS_dom"/>
</dbReference>
<dbReference type="InterPro" id="IPR002684">
    <property type="entry name" value="Biotin_synth/BioAB"/>
</dbReference>
<dbReference type="InterPro" id="IPR024177">
    <property type="entry name" value="Biotin_synthase"/>
</dbReference>
<dbReference type="InterPro" id="IPR006638">
    <property type="entry name" value="Elp3/MiaA/NifB-like_rSAM"/>
</dbReference>
<dbReference type="InterPro" id="IPR007197">
    <property type="entry name" value="rSAM"/>
</dbReference>
<dbReference type="NCBIfam" id="TIGR00433">
    <property type="entry name" value="bioB"/>
    <property type="match status" value="1"/>
</dbReference>
<dbReference type="PANTHER" id="PTHR22976">
    <property type="entry name" value="BIOTIN SYNTHASE"/>
    <property type="match status" value="1"/>
</dbReference>
<dbReference type="PANTHER" id="PTHR22976:SF2">
    <property type="entry name" value="BIOTIN SYNTHASE, MITOCHONDRIAL"/>
    <property type="match status" value="1"/>
</dbReference>
<dbReference type="Pfam" id="PF06968">
    <property type="entry name" value="BATS"/>
    <property type="match status" value="1"/>
</dbReference>
<dbReference type="Pfam" id="PF04055">
    <property type="entry name" value="Radical_SAM"/>
    <property type="match status" value="1"/>
</dbReference>
<dbReference type="PIRSF" id="PIRSF001619">
    <property type="entry name" value="Biotin_synth"/>
    <property type="match status" value="1"/>
</dbReference>
<dbReference type="SFLD" id="SFLDF00272">
    <property type="entry name" value="biotin_synthase"/>
    <property type="match status" value="1"/>
</dbReference>
<dbReference type="SFLD" id="SFLDG01278">
    <property type="entry name" value="biotin_synthase_like"/>
    <property type="match status" value="1"/>
</dbReference>
<dbReference type="SMART" id="SM00876">
    <property type="entry name" value="BATS"/>
    <property type="match status" value="1"/>
</dbReference>
<dbReference type="SMART" id="SM00729">
    <property type="entry name" value="Elp3"/>
    <property type="match status" value="1"/>
</dbReference>
<dbReference type="SUPFAM" id="SSF102114">
    <property type="entry name" value="Radical SAM enzymes"/>
    <property type="match status" value="1"/>
</dbReference>
<dbReference type="PROSITE" id="PS51918">
    <property type="entry name" value="RADICAL_SAM"/>
    <property type="match status" value="1"/>
</dbReference>
<proteinExistence type="inferred from homology"/>
<gene>
    <name evidence="1" type="primary">bioB</name>
    <name type="ordered locus">Plav_0036</name>
</gene>
<accession>A7HP26</accession>
<comment type="function">
    <text evidence="1">Catalyzes the conversion of dethiobiotin (DTB) to biotin by the insertion of a sulfur atom into dethiobiotin via a radical-based mechanism.</text>
</comment>
<comment type="catalytic activity">
    <reaction evidence="1">
        <text>(4R,5S)-dethiobiotin + (sulfur carrier)-SH + 2 reduced [2Fe-2S]-[ferredoxin] + 2 S-adenosyl-L-methionine = (sulfur carrier)-H + biotin + 2 5'-deoxyadenosine + 2 L-methionine + 2 oxidized [2Fe-2S]-[ferredoxin]</text>
        <dbReference type="Rhea" id="RHEA:22060"/>
        <dbReference type="Rhea" id="RHEA-COMP:10000"/>
        <dbReference type="Rhea" id="RHEA-COMP:10001"/>
        <dbReference type="Rhea" id="RHEA-COMP:14737"/>
        <dbReference type="Rhea" id="RHEA-COMP:14739"/>
        <dbReference type="ChEBI" id="CHEBI:17319"/>
        <dbReference type="ChEBI" id="CHEBI:29917"/>
        <dbReference type="ChEBI" id="CHEBI:33737"/>
        <dbReference type="ChEBI" id="CHEBI:33738"/>
        <dbReference type="ChEBI" id="CHEBI:57586"/>
        <dbReference type="ChEBI" id="CHEBI:57844"/>
        <dbReference type="ChEBI" id="CHEBI:59789"/>
        <dbReference type="ChEBI" id="CHEBI:64428"/>
        <dbReference type="ChEBI" id="CHEBI:149473"/>
        <dbReference type="EC" id="2.8.1.6"/>
    </reaction>
</comment>
<comment type="cofactor">
    <cofactor evidence="1">
        <name>[4Fe-4S] cluster</name>
        <dbReference type="ChEBI" id="CHEBI:49883"/>
    </cofactor>
    <text evidence="1">Binds 1 [4Fe-4S] cluster. The cluster is coordinated with 3 cysteines and an exchangeable S-adenosyl-L-methionine.</text>
</comment>
<comment type="cofactor">
    <cofactor evidence="1">
        <name>[2Fe-2S] cluster</name>
        <dbReference type="ChEBI" id="CHEBI:190135"/>
    </cofactor>
    <text evidence="1">Binds 1 [2Fe-2S] cluster. The cluster is coordinated with 3 cysteines and 1 arginine.</text>
</comment>
<comment type="pathway">
    <text evidence="1">Cofactor biosynthesis; biotin biosynthesis; biotin from 7,8-diaminononanoate: step 2/2.</text>
</comment>
<comment type="subunit">
    <text evidence="1">Homodimer.</text>
</comment>
<comment type="similarity">
    <text evidence="1">Belongs to the radical SAM superfamily. Biotin synthase family.</text>
</comment>
<comment type="sequence caution" evidence="3">
    <conflict type="erroneous initiation">
        <sequence resource="EMBL-CDS" id="ABS61659"/>
    </conflict>
</comment>
<sequence length="338" mass="37421">MTARTDPGALRHDWTREELQALFDLPFNDLLFEAQLVHRRWFKADEVQMSTLLSIKTGGCPEDCGYCAQSSKFDTGLKASKLMEVEKVLAEARKAKEAGATRYCMGAAWREPKDRDMDMVCAMVEGIKDMGMETCMTLGMLSGQQVHRLAQSGLDYYNHNIDTSEEYYPKVISTRTYQDRLETLERVRNAGINVCSGGIVGMGESPSDRIGMLMTLANLEEHPQSVPINMLMPVEGTALGASEKIDPIDFVRLIAVARIAMPQSVVRLSAGREHMSEETQALCFLAGANSIFIGEKLLTTKNPEADKDQRLFAKLGIRSMPAHSCPSEKDVSADRKAG</sequence>
<reference key="1">
    <citation type="journal article" date="2011" name="Stand. Genomic Sci.">
        <title>Complete genome sequence of Parvibaculum lavamentivorans type strain (DS-1(T)).</title>
        <authorList>
            <person name="Schleheck D."/>
            <person name="Weiss M."/>
            <person name="Pitluck S."/>
            <person name="Bruce D."/>
            <person name="Land M.L."/>
            <person name="Han S."/>
            <person name="Saunders E."/>
            <person name="Tapia R."/>
            <person name="Detter C."/>
            <person name="Brettin T."/>
            <person name="Han J."/>
            <person name="Woyke T."/>
            <person name="Goodwin L."/>
            <person name="Pennacchio L."/>
            <person name="Nolan M."/>
            <person name="Cook A.M."/>
            <person name="Kjelleberg S."/>
            <person name="Thomas T."/>
        </authorList>
    </citation>
    <scope>NUCLEOTIDE SEQUENCE [LARGE SCALE GENOMIC DNA]</scope>
    <source>
        <strain>DS-1 / DSM 13023 / NCIMB 13966</strain>
    </source>
</reference>
<keyword id="KW-0001">2Fe-2S</keyword>
<keyword id="KW-0004">4Fe-4S</keyword>
<keyword id="KW-0093">Biotin biosynthesis</keyword>
<keyword id="KW-0408">Iron</keyword>
<keyword id="KW-0411">Iron-sulfur</keyword>
<keyword id="KW-0479">Metal-binding</keyword>
<keyword id="KW-1185">Reference proteome</keyword>
<keyword id="KW-0949">S-adenosyl-L-methionine</keyword>
<keyword id="KW-0808">Transferase</keyword>
<protein>
    <recommendedName>
        <fullName evidence="1">Biotin synthase</fullName>
        <ecNumber evidence="1">2.8.1.6</ecNumber>
    </recommendedName>
</protein>
<feature type="chain" id="PRO_0000381517" description="Biotin synthase">
    <location>
        <begin position="1"/>
        <end position="338"/>
    </location>
</feature>
<feature type="domain" description="Radical SAM core" evidence="2">
    <location>
        <begin position="45"/>
        <end position="272"/>
    </location>
</feature>
<feature type="binding site" evidence="1">
    <location>
        <position position="60"/>
    </location>
    <ligand>
        <name>[4Fe-4S] cluster</name>
        <dbReference type="ChEBI" id="CHEBI:49883"/>
        <note>4Fe-4S-S-AdoMet</note>
    </ligand>
</feature>
<feature type="binding site" evidence="1">
    <location>
        <position position="64"/>
    </location>
    <ligand>
        <name>[4Fe-4S] cluster</name>
        <dbReference type="ChEBI" id="CHEBI:49883"/>
        <note>4Fe-4S-S-AdoMet</note>
    </ligand>
</feature>
<feature type="binding site" evidence="1">
    <location>
        <position position="67"/>
    </location>
    <ligand>
        <name>[4Fe-4S] cluster</name>
        <dbReference type="ChEBI" id="CHEBI:49883"/>
        <note>4Fe-4S-S-AdoMet</note>
    </ligand>
</feature>
<feature type="binding site" evidence="1">
    <location>
        <position position="104"/>
    </location>
    <ligand>
        <name>[2Fe-2S] cluster</name>
        <dbReference type="ChEBI" id="CHEBI:190135"/>
    </ligand>
</feature>
<feature type="binding site" evidence="1">
    <location>
        <position position="135"/>
    </location>
    <ligand>
        <name>[2Fe-2S] cluster</name>
        <dbReference type="ChEBI" id="CHEBI:190135"/>
    </ligand>
</feature>
<feature type="binding site" evidence="1">
    <location>
        <position position="195"/>
    </location>
    <ligand>
        <name>[2Fe-2S] cluster</name>
        <dbReference type="ChEBI" id="CHEBI:190135"/>
    </ligand>
</feature>
<feature type="binding site" evidence="1">
    <location>
        <position position="267"/>
    </location>
    <ligand>
        <name>[2Fe-2S] cluster</name>
        <dbReference type="ChEBI" id="CHEBI:190135"/>
    </ligand>
</feature>